<sequence>MICLFGNCNCQTGIFGLYDYVSFLYHSPSSCRVRLVLSLPASPNHMEEQSPKFESSFPRRTSEGPVDDVGKSPPASFYRELLANKAQQPQLSEDEEDHNPKDFLFKEDSEDELLIPDSENHNSSSTSPRKFKVENIRWGSDTLNGSILPLNSQGSNLQSLLSNVGELEHLLSKDVAKHSKYLKEQSSKVEKARANIVTNLTRLSLVLSSIFNTYQAKAQDKQAILDKIEEWEDEKKSLLDDMKEVLSTDDNADGETHKFLELASESINVENEIEALETRLKQLKIKQRTLKNECFQSQGIIESRLSNFVQAVEKIEMRERKSIEQVVQQLSENQLGYWNDNLALEVMNGLTINPGDISLVEEYEPVDILKQVESLEKPTIAADYHLPKNTNKQASRFTRQLLEFNYKCQPKLNVYPVVGLITKELKEDSAKEQEYKHRYDQVTHTLSALKDSFALIYHTEQQLQSITQSTQDLKDFQSLMNQMVESLLKTHSEADQYNLYLAKDVLAQEISIIHQALNKLNQSTEYSSVESDNVKNHDGLLFQTFSKAQERTKLPSIKSATSIRYAPSLYNSLSPTSTSKTTAKGEVNYDAGINKYTKVKEVLRSGKGNKDE</sequence>
<feature type="chain" id="PRO_0000422167" description="Autophagy-related protein 28">
    <location>
        <begin position="1"/>
        <end position="612"/>
    </location>
</feature>
<feature type="region of interest" description="Disordered" evidence="2">
    <location>
        <begin position="44"/>
        <end position="72"/>
    </location>
</feature>
<feature type="coiled-coil region" evidence="1">
    <location>
        <begin position="214"/>
        <end position="296"/>
    </location>
</feature>
<name>ATG28_KOMPG</name>
<evidence type="ECO:0000255" key="1"/>
<evidence type="ECO:0000256" key="2">
    <source>
        <dbReference type="SAM" id="MobiDB-lite"/>
    </source>
</evidence>
<evidence type="ECO:0000269" key="3">
    <source>
    </source>
</evidence>
<evidence type="ECO:0000269" key="4">
    <source>
    </source>
</evidence>
<evidence type="ECO:0000269" key="5">
    <source>
    </source>
</evidence>
<evidence type="ECO:0000305" key="6"/>
<reference key="1">
    <citation type="journal article" date="2009" name="Nat. Biotechnol.">
        <title>Genome sequence of the recombinant protein production host Pichia pastoris.</title>
        <authorList>
            <person name="De Schutter K."/>
            <person name="Lin Y.-C."/>
            <person name="Tiels P."/>
            <person name="Van Hecke A."/>
            <person name="Glinka S."/>
            <person name="Weber-Lehmann J."/>
            <person name="Rouze P."/>
            <person name="Van de Peer Y."/>
            <person name="Callewaert N."/>
        </authorList>
    </citation>
    <scope>NUCLEOTIDE SEQUENCE [LARGE SCALE GENOMIC DNA]</scope>
    <source>
        <strain>GS115 / ATCC 20864</strain>
    </source>
</reference>
<reference key="2">
    <citation type="journal article" date="2006" name="Autophagy">
        <title>Atg28, a novel coiled-coil protein involved in autophagic degradation of peroxisomes in the methylotrophic yeast Pichia pastoris.</title>
        <authorList>
            <person name="Stasyk O.V."/>
            <person name="Stasyk O.G."/>
            <person name="Mathewson R.D."/>
            <person name="Farre J.-C."/>
            <person name="Nazarko V.Y."/>
            <person name="Krasovska O.S."/>
            <person name="Subramani S."/>
            <person name="Cregg J.M."/>
            <person name="Sibirny A.A."/>
        </authorList>
    </citation>
    <scope>FUNCTION</scope>
    <scope>SUBCELLULAR LOCATION</scope>
</reference>
<reference key="3">
    <citation type="journal article" date="2009" name="Mol. Biol. Cell">
        <title>Peroxisome size provides insights into the function of autophagy-related proteins.</title>
        <authorList>
            <person name="Nazarko T.Y."/>
            <person name="Farre J.C."/>
            <person name="Subramani S."/>
        </authorList>
    </citation>
    <scope>FUNCTION</scope>
</reference>
<reference key="4">
    <citation type="journal article" date="2011" name="Autophagy">
        <title>Atg35, a micropexophagy-specific protein that regulates micropexophagic apparatus formation in Pichia pastoris.</title>
        <authorList>
            <person name="Nazarko V.Y."/>
            <person name="Nazarko T.Y."/>
            <person name="Farre J.C."/>
            <person name="Stasyk O.V."/>
            <person name="Warnecke D."/>
            <person name="Ulaszewski S."/>
            <person name="Cregg J.M."/>
            <person name="Sibirny A.A."/>
            <person name="Subramani S."/>
        </authorList>
    </citation>
    <scope>INTERACTION WITH ATG35</scope>
    <scope>FUNCTION</scope>
    <scope>INDUCTION</scope>
</reference>
<keyword id="KW-0072">Autophagy</keyword>
<keyword id="KW-0175">Coiled coil</keyword>
<keyword id="KW-0963">Cytoplasm</keyword>
<keyword id="KW-0968">Cytoplasmic vesicle</keyword>
<keyword id="KW-0472">Membrane</keyword>
<keyword id="KW-0653">Protein transport</keyword>
<keyword id="KW-1185">Reference proteome</keyword>
<keyword id="KW-0813">Transport</keyword>
<keyword id="KW-0926">Vacuole</keyword>
<accession>C4R159</accession>
<dbReference type="EMBL" id="FN392320">
    <property type="protein sequence ID" value="CAY69233.1"/>
    <property type="molecule type" value="Genomic_DNA"/>
</dbReference>
<dbReference type="RefSeq" id="XP_002491513.1">
    <property type="nucleotide sequence ID" value="XM_002491468.1"/>
</dbReference>
<dbReference type="SMR" id="C4R159"/>
<dbReference type="STRING" id="644223.C4R159"/>
<dbReference type="EnsemblFungi" id="CAY69233">
    <property type="protein sequence ID" value="CAY69233"/>
    <property type="gene ID" value="PAS_chr2-1_0596"/>
</dbReference>
<dbReference type="GeneID" id="8198033"/>
<dbReference type="KEGG" id="ppa:PAS_chr2-1_0596"/>
<dbReference type="HOGENOM" id="CLU_480673_0_0_1"/>
<dbReference type="InParanoid" id="C4R159"/>
<dbReference type="OrthoDB" id="3993941at2759"/>
<dbReference type="Proteomes" id="UP000000314">
    <property type="component" value="Chromosome 2"/>
</dbReference>
<dbReference type="GO" id="GO:0030659">
    <property type="term" value="C:cytoplasmic vesicle membrane"/>
    <property type="evidence" value="ECO:0007669"/>
    <property type="project" value="UniProtKB-SubCell"/>
</dbReference>
<dbReference type="GO" id="GO:0005774">
    <property type="term" value="C:vacuolar membrane"/>
    <property type="evidence" value="ECO:0007669"/>
    <property type="project" value="UniProtKB-SubCell"/>
</dbReference>
<dbReference type="GO" id="GO:0006914">
    <property type="term" value="P:autophagy"/>
    <property type="evidence" value="ECO:0007669"/>
    <property type="project" value="UniProtKB-KW"/>
</dbReference>
<dbReference type="GO" id="GO:0015031">
    <property type="term" value="P:protein transport"/>
    <property type="evidence" value="ECO:0007669"/>
    <property type="project" value="UniProtKB-KW"/>
</dbReference>
<proteinExistence type="evidence at protein level"/>
<gene>
    <name type="primary">ATG28</name>
    <name type="ordered locus">PAS_chr2-1_0596</name>
</gene>
<protein>
    <recommendedName>
        <fullName>Autophagy-related protein 28</fullName>
    </recommendedName>
</protein>
<organism>
    <name type="scientific">Komagataella phaffii (strain GS115 / ATCC 20864)</name>
    <name type="common">Yeast</name>
    <name type="synonym">Pichia pastoris</name>
    <dbReference type="NCBI Taxonomy" id="644223"/>
    <lineage>
        <taxon>Eukaryota</taxon>
        <taxon>Fungi</taxon>
        <taxon>Dikarya</taxon>
        <taxon>Ascomycota</taxon>
        <taxon>Saccharomycotina</taxon>
        <taxon>Pichiomycetes</taxon>
        <taxon>Pichiales</taxon>
        <taxon>Pichiaceae</taxon>
        <taxon>Komagataella</taxon>
    </lineage>
</organism>
<comment type="function">
    <text evidence="3 4 5">Required for the autophagic degradation of peroxisomes called pexophagy, but not essential for general autophagy. Involved in resistance to elevated pH.</text>
</comment>
<comment type="subunit">
    <text evidence="5">Interacts with ATG35.</text>
</comment>
<comment type="subcellular location">
    <subcellularLocation>
        <location evidence="3">Cytoplasm</location>
    </subcellularLocation>
    <subcellularLocation>
        <location evidence="3">Vacuole membrane</location>
        <topology evidence="3">Peripheral membrane protein</topology>
    </subcellularLocation>
    <subcellularLocation>
        <location evidence="3">Cytoplasmic vesicle membrane</location>
        <topology evidence="3">Peripheral membrane protein</topology>
    </subcellularLocation>
    <text>Concentration increases at the vacuolar and cytoplasmic vesicular membranes during the course of pexophagy.</text>
</comment>
<comment type="induction">
    <text evidence="5">Expression is induced by methanol and glucose.</text>
</comment>
<comment type="similarity">
    <text evidence="6">Belongs to the ATG28 family.</text>
</comment>